<gene>
    <name evidence="6" type="primary">FDB1</name>
    <name type="ORF">FPSE_08124</name>
</gene>
<protein>
    <recommendedName>
        <fullName evidence="6">Gamma-lactamase FDB1</fullName>
        <ecNumber evidence="8">3.1.1.-</ecNumber>
    </recommendedName>
    <alternativeName>
        <fullName evidence="6">Fusarium detoxification of benzoxazolinone cluster protein 1</fullName>
        <shortName evidence="6">FDB cluster protein 1</shortName>
    </alternativeName>
</protein>
<comment type="function">
    <text evidence="2 3 4 5 9">Gamma-lactamase; part of the Fusarium detoxification of benzoxazolinone cluster involved in the degradation of benzoxazolinones produced by the host plant (PubMed:25727347, PubMed:26296598, PubMed:26828593). Maize, wheat, and rye produce the 2 benzoxazinone phytoanticipins 2,4-dihy-droxy-7-methoxy-1,4-benzoxazin-3-one (DIMBOA) and 2,4-dihydroxy-1,4-benzoxazin-3-one (DIBOA) that, due to their inherent instability once released, spontaneously degrade to the more stable corresponding benzoxazolinones, 6-methoxy-2-benzoxazolinone (MBOA) and 2-benzoxazolinone (BOA), respectively (By similarity). The first step in the detoxification of benzoxazolinones involves the hydrolysis of the cyclic ester bond of benzoxazolinones by the gamma-lactamase FDB1 to aminophenols (PubMed:26296598). FDB1 is able to convert BOA into 2-aminophenol (2-AP), as well as MBOA into 5-methoxy-2-aminophenol (2-AMP) (PubMed:25727347, PubMed:26296598). The N-malonyltransferase FDB2 then metabolizes aminophenols via N-malonylation to non-toxic malonamic acids (PubMed:26296598). FDB2 converts 2-AP into N-(2-hydroxyphenyl) malonamic acid (HPMA) and 2-AMP into N-(2-hydroxy-4-methoxyphenyl) malonamic acid (HMPMA) (PubMed:26296598). The cluster also contains 2 transcription factors (FDB3 and FPSE_08121), an aldo-keto reductase (FPSE_08125) that possibly associates with a ketone component of BOA and MBOA degradation, an esterase (FPSE_08126), an acyl-CoA transferase (FPSE_08120), a solute carrier protein (FPSE_08119) and a transmembrane transporter (FPSE_08127) proposed to shuttle metabolites of benzoxazolinone degradation (Probable).</text>
</comment>
<comment type="biophysicochemical properties">
    <kinetics>
        <KM evidence="4">0.19 mM for 2-benzoxasolinone (BOA)</KM>
    </kinetics>
</comment>
<comment type="pathway">
    <text evidence="4">Xenobiotic degradation.</text>
</comment>
<comment type="induction">
    <text evidence="3 4 5">Expression is induced in response to 2-benzoxasolinone (BOA) exposure (PubMed:25727347, PubMed:26296598). Expression is also induced in response to 6-methoxy-2-benzoxazolinone (MBOA) and 2-aminophenol (2-AP) treatment (PubMed:26828593).</text>
</comment>
<comment type="disruption phenotype">
    <text evidence="4">Reduces the tolerance to benzoxazolinones but not to aminophenols.</text>
</comment>
<comment type="similarity">
    <text evidence="7">Belongs to the metallo-beta-lactamase superfamily.</text>
</comment>
<organism>
    <name type="scientific">Fusarium pseudograminearum (strain CS3096)</name>
    <name type="common">Wheat and barley crown-rot fungus</name>
    <dbReference type="NCBI Taxonomy" id="1028729"/>
    <lineage>
        <taxon>Eukaryota</taxon>
        <taxon>Fungi</taxon>
        <taxon>Dikarya</taxon>
        <taxon>Ascomycota</taxon>
        <taxon>Pezizomycotina</taxon>
        <taxon>Sordariomycetes</taxon>
        <taxon>Hypocreomycetidae</taxon>
        <taxon>Hypocreales</taxon>
        <taxon>Nectriaceae</taxon>
        <taxon>Fusarium</taxon>
    </lineage>
</organism>
<evidence type="ECO:0000250" key="1">
    <source>
        <dbReference type="UniProtKB" id="Q7B8B9"/>
    </source>
</evidence>
<evidence type="ECO:0000250" key="2">
    <source>
        <dbReference type="UniProtKB" id="W7MLD5"/>
    </source>
</evidence>
<evidence type="ECO:0000269" key="3">
    <source>
    </source>
</evidence>
<evidence type="ECO:0000269" key="4">
    <source>
    </source>
</evidence>
<evidence type="ECO:0000269" key="5">
    <source>
    </source>
</evidence>
<evidence type="ECO:0000303" key="6">
    <source>
    </source>
</evidence>
<evidence type="ECO:0000305" key="7"/>
<evidence type="ECO:0000305" key="8">
    <source>
    </source>
</evidence>
<evidence type="ECO:0000305" key="9">
    <source>
    </source>
</evidence>
<dbReference type="EC" id="3.1.1.-" evidence="8"/>
<dbReference type="EMBL" id="CM003199">
    <property type="protein sequence ID" value="EKJ71678.1"/>
    <property type="molecule type" value="Genomic_DNA"/>
</dbReference>
<dbReference type="RefSeq" id="XP_009259517.1">
    <property type="nucleotide sequence ID" value="XM_009261242.1"/>
</dbReference>
<dbReference type="EnsemblFungi" id="EKJ71678">
    <property type="protein sequence ID" value="EKJ71678"/>
    <property type="gene ID" value="FPSE_08124"/>
</dbReference>
<dbReference type="GeneID" id="20366742"/>
<dbReference type="KEGG" id="fpu:FPSE_08124"/>
<dbReference type="eggNOG" id="ENOG502S1A6">
    <property type="taxonomic scope" value="Eukaryota"/>
</dbReference>
<dbReference type="HOGENOM" id="CLU_030571_1_0_1"/>
<dbReference type="OrthoDB" id="10250730at2759"/>
<dbReference type="BRENDA" id="3.5.2.B2">
    <property type="organism ID" value="14501"/>
</dbReference>
<dbReference type="Proteomes" id="UP000007978">
    <property type="component" value="Chromosome 2"/>
</dbReference>
<dbReference type="GO" id="GO:0016787">
    <property type="term" value="F:hydrolase activity"/>
    <property type="evidence" value="ECO:0007669"/>
    <property type="project" value="UniProtKB-KW"/>
</dbReference>
<dbReference type="GO" id="GO:0046872">
    <property type="term" value="F:metal ion binding"/>
    <property type="evidence" value="ECO:0007669"/>
    <property type="project" value="UniProtKB-KW"/>
</dbReference>
<dbReference type="GO" id="GO:0044550">
    <property type="term" value="P:secondary metabolite biosynthetic process"/>
    <property type="evidence" value="ECO:0007669"/>
    <property type="project" value="UniProtKB-ARBA"/>
</dbReference>
<dbReference type="CDD" id="cd07730">
    <property type="entry name" value="metallo-hydrolase-like_MBL-fold"/>
    <property type="match status" value="1"/>
</dbReference>
<dbReference type="Gene3D" id="3.60.15.10">
    <property type="entry name" value="Ribonuclease Z/Hydroxyacylglutathione hydrolase-like"/>
    <property type="match status" value="1"/>
</dbReference>
<dbReference type="InterPro" id="IPR051013">
    <property type="entry name" value="MBL_superfamily_lactonases"/>
</dbReference>
<dbReference type="InterPro" id="IPR001279">
    <property type="entry name" value="Metallo-B-lactamas"/>
</dbReference>
<dbReference type="InterPro" id="IPR036866">
    <property type="entry name" value="RibonucZ/Hydroxyglut_hydro"/>
</dbReference>
<dbReference type="PANTHER" id="PTHR42978:SF5">
    <property type="entry name" value="METALLO-BETA-LACTAMASE DOMAIN-CONTAINING PROTEIN"/>
    <property type="match status" value="1"/>
</dbReference>
<dbReference type="PANTHER" id="PTHR42978">
    <property type="entry name" value="QUORUM-QUENCHING LACTONASE YTNP-RELATED-RELATED"/>
    <property type="match status" value="1"/>
</dbReference>
<dbReference type="Pfam" id="PF00753">
    <property type="entry name" value="Lactamase_B"/>
    <property type="match status" value="1"/>
</dbReference>
<dbReference type="SMART" id="SM00849">
    <property type="entry name" value="Lactamase_B"/>
    <property type="match status" value="1"/>
</dbReference>
<dbReference type="SUPFAM" id="SSF56281">
    <property type="entry name" value="Metallo-hydrolase/oxidoreductase"/>
    <property type="match status" value="1"/>
</dbReference>
<keyword id="KW-0378">Hydrolase</keyword>
<keyword id="KW-0479">Metal-binding</keyword>
<keyword id="KW-1185">Reference proteome</keyword>
<keyword id="KW-0862">Zinc</keyword>
<sequence length="413" mass="45704">MSSIRLPPPVVIPESQSTVDVYIIDTTSYMSMVPASSFVEPLVSGFETLNAGSYAFLIEHTSSKPSKHDTMVFDLGVRKDWEHLPDTFVAAVKEEGWSIDVQTDVASILRDNGQDLKSVGAIIWSHWHFDHVGDPQTFPSSTDLIVGPGFKQGVMPGWPTAKDSHVNETAWQGRKLIEIDFSGEAALDIGRFQAYDFYGDGSFYLLNSPGHAVGHMSALARTTADPPSFMLLGGDIAHHCGEFRPSPYTPLPNMITPNPLSNTLLACPGRLFLSIHPWKDPERPFFDPTVGPGWHDEGVLAKDSIDKLIEADAYDNIFPVVAHDMTLVGTVDLYPNKANNWMSRGWKEDTRWGFCGDFTPLDEEMVARNGQVEVLEGHHEVRDSAQDPKVTSIVHMESTDVDKKAKLHDPSFV</sequence>
<name>FDB1_FUSPC</name>
<proteinExistence type="evidence at protein level"/>
<reference key="1">
    <citation type="journal article" date="2012" name="PLoS Pathog.">
        <title>Comparative pathogenomics reveals horizontally acquired novel virulence genes in fungi infecting cereal hosts.</title>
        <authorList>
            <person name="Gardiner D.M."/>
            <person name="McDonald M.C."/>
            <person name="Covarelli L."/>
            <person name="Solomon P.S."/>
            <person name="Rusu A.G."/>
            <person name="Marshall M."/>
            <person name="Kazan K."/>
            <person name="Chakraborty S."/>
            <person name="McDonald B.A."/>
            <person name="Manners J.M."/>
        </authorList>
    </citation>
    <scope>NUCLEOTIDE SEQUENCE [LARGE SCALE GENOMIC DNA]</scope>
    <source>
        <strain>CS3096</strain>
    </source>
</reference>
<reference key="2">
    <citation type="journal article" date="2015" name="Fungal Genet. Biol.">
        <title>A gamma-lactamase from cereal infecting Fusarium spp. catalyses the first step in the degradation of the benzoxazolinone class of phytoalexins.</title>
        <authorList>
            <person name="Kettle A.J."/>
            <person name="Carere J."/>
            <person name="Batley J."/>
            <person name="Benfield A.H."/>
            <person name="Manners J.M."/>
            <person name="Kazan K."/>
            <person name="Gardiner D.M."/>
        </authorList>
    </citation>
    <scope>FUNCTION</scope>
    <scope>INDUCTION</scope>
    <scope>CATALYTIC ACTIVITY</scope>
    <scope>BIOPHYSICOCHEMICAL PROPERTIES</scope>
    <scope>DISRUPTION PHENOTYPE</scope>
    <scope>PATHWAY</scope>
</reference>
<reference key="3">
    <citation type="journal article" date="2015" name="Mol. Plant Pathol.">
        <title>Degradation of the benzoxazolinone class of phytoalexins is important for virulence of Fusarium pseudograminearum towards wheat.</title>
        <authorList>
            <person name="Kettle A.J."/>
            <person name="Batley J."/>
            <person name="Benfield A.H."/>
            <person name="Manners J.M."/>
            <person name="Kazan K."/>
            <person name="Gardiner D.M."/>
        </authorList>
    </citation>
    <scope>FUNCTION</scope>
    <scope>INDUCTION</scope>
</reference>
<reference key="4">
    <citation type="journal article" date="2016" name="Fungal Genet. Biol.">
        <title>The Fdb3 transcription factor of the Fusarium Detoxification of Benzoxazolinone gene cluster is required for MBOA but not BOA degradation in Fusarium pseudograminearum.</title>
        <authorList>
            <person name="Kettle A.J."/>
            <person name="Carere J."/>
            <person name="Batley J."/>
            <person name="Manners J.M."/>
            <person name="Kazan K."/>
            <person name="Gardiner D.M."/>
        </authorList>
    </citation>
    <scope>FUNCTION</scope>
    <scope>INDUCTION</scope>
</reference>
<feature type="chain" id="PRO_0000454591" description="Gamma-lactamase FDB1">
    <location>
        <begin position="1"/>
        <end position="413"/>
    </location>
</feature>
<feature type="binding site" evidence="1">
    <location>
        <position position="126"/>
    </location>
    <ligand>
        <name>Zn(2+)</name>
        <dbReference type="ChEBI" id="CHEBI:29105"/>
        <label>1</label>
    </ligand>
</feature>
<feature type="binding site" evidence="1">
    <location>
        <position position="128"/>
    </location>
    <ligand>
        <name>Zn(2+)</name>
        <dbReference type="ChEBI" id="CHEBI:29105"/>
        <label>1</label>
    </ligand>
</feature>
<feature type="binding site" evidence="1">
    <location>
        <position position="130"/>
    </location>
    <ligand>
        <name>Zn(2+)</name>
        <dbReference type="ChEBI" id="CHEBI:29105"/>
        <label>2</label>
    </ligand>
</feature>
<feature type="binding site" evidence="1">
    <location>
        <position position="131"/>
    </location>
    <ligand>
        <name>Zn(2+)</name>
        <dbReference type="ChEBI" id="CHEBI:29105"/>
        <label>2</label>
    </ligand>
</feature>
<feature type="binding site" evidence="1">
    <location>
        <position position="211"/>
    </location>
    <ligand>
        <name>Zn(2+)</name>
        <dbReference type="ChEBI" id="CHEBI:29105"/>
        <label>1</label>
    </ligand>
</feature>
<feature type="binding site" evidence="1">
    <location>
        <position position="235"/>
    </location>
    <ligand>
        <name>Zn(2+)</name>
        <dbReference type="ChEBI" id="CHEBI:29105"/>
        <label>1</label>
    </ligand>
</feature>
<feature type="binding site" evidence="1">
    <location>
        <position position="235"/>
    </location>
    <ligand>
        <name>Zn(2+)</name>
        <dbReference type="ChEBI" id="CHEBI:29105"/>
        <label>2</label>
    </ligand>
</feature>
<feature type="binding site" evidence="1">
    <location>
        <position position="323"/>
    </location>
    <ligand>
        <name>Zn(2+)</name>
        <dbReference type="ChEBI" id="CHEBI:29105"/>
        <label>2</label>
    </ligand>
</feature>
<accession>K3VFR8</accession>